<comment type="function">
    <text evidence="1">Allows the formation of correctly charged Gln-tRNA(Gln) through the transamidation of misacylated Glu-tRNA(Gln) in organisms which lack glutaminyl-tRNA synthetase. The reaction takes place in the presence of glutamine and ATP through an activated gamma-phospho-Glu-tRNA(Gln).</text>
</comment>
<comment type="catalytic activity">
    <reaction evidence="1">
        <text>L-glutamyl-tRNA(Gln) + L-glutamine + ATP + H2O = L-glutaminyl-tRNA(Gln) + L-glutamate + ADP + phosphate + H(+)</text>
        <dbReference type="Rhea" id="RHEA:17521"/>
        <dbReference type="Rhea" id="RHEA-COMP:9681"/>
        <dbReference type="Rhea" id="RHEA-COMP:9684"/>
        <dbReference type="ChEBI" id="CHEBI:15377"/>
        <dbReference type="ChEBI" id="CHEBI:15378"/>
        <dbReference type="ChEBI" id="CHEBI:29985"/>
        <dbReference type="ChEBI" id="CHEBI:30616"/>
        <dbReference type="ChEBI" id="CHEBI:43474"/>
        <dbReference type="ChEBI" id="CHEBI:58359"/>
        <dbReference type="ChEBI" id="CHEBI:78520"/>
        <dbReference type="ChEBI" id="CHEBI:78521"/>
        <dbReference type="ChEBI" id="CHEBI:456216"/>
        <dbReference type="EC" id="6.3.5.7"/>
    </reaction>
</comment>
<comment type="subunit">
    <text evidence="1">Heterotrimer of A, B and C subunits.</text>
</comment>
<comment type="similarity">
    <text evidence="1">Belongs to the amidase family. GatA subfamily.</text>
</comment>
<proteinExistence type="inferred from homology"/>
<keyword id="KW-0067">ATP-binding</keyword>
<keyword id="KW-0436">Ligase</keyword>
<keyword id="KW-0547">Nucleotide-binding</keyword>
<keyword id="KW-0648">Protein biosynthesis</keyword>
<keyword id="KW-1185">Reference proteome</keyword>
<evidence type="ECO:0000255" key="1">
    <source>
        <dbReference type="HAMAP-Rule" id="MF_00120"/>
    </source>
</evidence>
<sequence>MHTKTIKELSALLQTKKISATELAQLFLKRMGASDLNAFLHVDEALTLQQAAAADQRIASGNAGVLTGIPIAHKDIFVTRNWRSTAGSKMLENYVSPFDATVVENFNQAGMVTLGKLNCDEFAMGSSNENSYFGAVKNPWDKTAIPGGSSGGSAAAIAARLTPASTATDTGGSIRQPAALCGVTGIKPTYGRVSRFGMIAFASSLDQGGPIAKTAEDCGLLLNAMVSFDERDSTSVERDKEDFTRDLNAPLEGLKIGIPREYFGAGLSADVEQAVRAALGEYEKLGATLVDISLPKTELSIPTYYVIAPAEASSNLSRFDGVRYGFRAKDYTDLSDMYCKTRAEGFGEEVKRRILVGAYVLSHGYYDAYYLQAQKIRRLIAQDFQQAFTLCDVIMGPVAPSVAWDLGDKADDPVANYLADIFTLSTSLAGLPGMSIPCGFGQGEKNAKRPVGLQIIGNYFAEAKLLNVAHQYQQATDWHLRQPAE</sequence>
<accession>A4G1L4</accession>
<organism>
    <name type="scientific">Herminiimonas arsenicoxydans</name>
    <dbReference type="NCBI Taxonomy" id="204773"/>
    <lineage>
        <taxon>Bacteria</taxon>
        <taxon>Pseudomonadati</taxon>
        <taxon>Pseudomonadota</taxon>
        <taxon>Betaproteobacteria</taxon>
        <taxon>Burkholderiales</taxon>
        <taxon>Oxalobacteraceae</taxon>
        <taxon>Herminiimonas</taxon>
    </lineage>
</organism>
<protein>
    <recommendedName>
        <fullName evidence="1">Glutamyl-tRNA(Gln) amidotransferase subunit A</fullName>
        <shortName evidence="1">Glu-ADT subunit A</shortName>
        <ecNumber evidence="1">6.3.5.7</ecNumber>
    </recommendedName>
</protein>
<reference key="1">
    <citation type="journal article" date="2007" name="PLoS Genet.">
        <title>A tale of two oxidation states: bacterial colonization of arsenic-rich environments.</title>
        <authorList>
            <person name="Muller D."/>
            <person name="Medigue C."/>
            <person name="Koechler S."/>
            <person name="Barbe V."/>
            <person name="Barakat M."/>
            <person name="Talla E."/>
            <person name="Bonnefoy V."/>
            <person name="Krin E."/>
            <person name="Arsene-Ploetze F."/>
            <person name="Carapito C."/>
            <person name="Chandler M."/>
            <person name="Cournoyer B."/>
            <person name="Cruveiller S."/>
            <person name="Dossat C."/>
            <person name="Duval S."/>
            <person name="Heymann M."/>
            <person name="Leize E."/>
            <person name="Lieutaud A."/>
            <person name="Lievremont D."/>
            <person name="Makita Y."/>
            <person name="Mangenot S."/>
            <person name="Nitschke W."/>
            <person name="Ortet P."/>
            <person name="Perdrial N."/>
            <person name="Schoepp B."/>
            <person name="Siguier P."/>
            <person name="Simeonova D.D."/>
            <person name="Rouy Z."/>
            <person name="Segurens B."/>
            <person name="Turlin E."/>
            <person name="Vallenet D."/>
            <person name="van Dorsselaer A."/>
            <person name="Weiss S."/>
            <person name="Weissenbach J."/>
            <person name="Lett M.-C."/>
            <person name="Danchin A."/>
            <person name="Bertin P.N."/>
        </authorList>
    </citation>
    <scope>NUCLEOTIDE SEQUENCE [LARGE SCALE GENOMIC DNA]</scope>
    <source>
        <strain>ULPAs1</strain>
    </source>
</reference>
<dbReference type="EC" id="6.3.5.7" evidence="1"/>
<dbReference type="EMBL" id="CU207211">
    <property type="protein sequence ID" value="CAL60401.1"/>
    <property type="molecule type" value="Genomic_DNA"/>
</dbReference>
<dbReference type="SMR" id="A4G1L4"/>
<dbReference type="STRING" id="204773.HEAR0166"/>
<dbReference type="KEGG" id="har:HEAR0166"/>
<dbReference type="eggNOG" id="COG0154">
    <property type="taxonomic scope" value="Bacteria"/>
</dbReference>
<dbReference type="HOGENOM" id="CLU_009600_0_3_4"/>
<dbReference type="OrthoDB" id="9811471at2"/>
<dbReference type="Proteomes" id="UP000006697">
    <property type="component" value="Chromosome"/>
</dbReference>
<dbReference type="GO" id="GO:0030956">
    <property type="term" value="C:glutamyl-tRNA(Gln) amidotransferase complex"/>
    <property type="evidence" value="ECO:0007669"/>
    <property type="project" value="InterPro"/>
</dbReference>
<dbReference type="GO" id="GO:0005524">
    <property type="term" value="F:ATP binding"/>
    <property type="evidence" value="ECO:0007669"/>
    <property type="project" value="UniProtKB-KW"/>
</dbReference>
<dbReference type="GO" id="GO:0050567">
    <property type="term" value="F:glutaminyl-tRNA synthase (glutamine-hydrolyzing) activity"/>
    <property type="evidence" value="ECO:0007669"/>
    <property type="project" value="UniProtKB-UniRule"/>
</dbReference>
<dbReference type="GO" id="GO:0006412">
    <property type="term" value="P:translation"/>
    <property type="evidence" value="ECO:0007669"/>
    <property type="project" value="UniProtKB-UniRule"/>
</dbReference>
<dbReference type="Gene3D" id="3.90.1300.10">
    <property type="entry name" value="Amidase signature (AS) domain"/>
    <property type="match status" value="1"/>
</dbReference>
<dbReference type="HAMAP" id="MF_00120">
    <property type="entry name" value="GatA"/>
    <property type="match status" value="1"/>
</dbReference>
<dbReference type="InterPro" id="IPR000120">
    <property type="entry name" value="Amidase"/>
</dbReference>
<dbReference type="InterPro" id="IPR020556">
    <property type="entry name" value="Amidase_CS"/>
</dbReference>
<dbReference type="InterPro" id="IPR023631">
    <property type="entry name" value="Amidase_dom"/>
</dbReference>
<dbReference type="InterPro" id="IPR036928">
    <property type="entry name" value="AS_sf"/>
</dbReference>
<dbReference type="InterPro" id="IPR004412">
    <property type="entry name" value="GatA"/>
</dbReference>
<dbReference type="NCBIfam" id="TIGR00132">
    <property type="entry name" value="gatA"/>
    <property type="match status" value="1"/>
</dbReference>
<dbReference type="PANTHER" id="PTHR11895:SF151">
    <property type="entry name" value="GLUTAMYL-TRNA(GLN) AMIDOTRANSFERASE SUBUNIT A"/>
    <property type="match status" value="1"/>
</dbReference>
<dbReference type="PANTHER" id="PTHR11895">
    <property type="entry name" value="TRANSAMIDASE"/>
    <property type="match status" value="1"/>
</dbReference>
<dbReference type="Pfam" id="PF01425">
    <property type="entry name" value="Amidase"/>
    <property type="match status" value="1"/>
</dbReference>
<dbReference type="SUPFAM" id="SSF75304">
    <property type="entry name" value="Amidase signature (AS) enzymes"/>
    <property type="match status" value="1"/>
</dbReference>
<dbReference type="PROSITE" id="PS00571">
    <property type="entry name" value="AMIDASES"/>
    <property type="match status" value="1"/>
</dbReference>
<name>GATA_HERAR</name>
<feature type="chain" id="PRO_1000015840" description="Glutamyl-tRNA(Gln) amidotransferase subunit A">
    <location>
        <begin position="1"/>
        <end position="485"/>
    </location>
</feature>
<feature type="active site" description="Charge relay system" evidence="1">
    <location>
        <position position="74"/>
    </location>
</feature>
<feature type="active site" description="Charge relay system" evidence="1">
    <location>
        <position position="149"/>
    </location>
</feature>
<feature type="active site" description="Acyl-ester intermediate" evidence="1">
    <location>
        <position position="173"/>
    </location>
</feature>
<gene>
    <name evidence="1" type="primary">gatA</name>
    <name type="ordered locus">HEAR0166</name>
</gene>